<proteinExistence type="evidence at protein level"/>
<protein>
    <recommendedName>
        <fullName>Sperm-associated antigen 1</fullName>
    </recommendedName>
    <alternativeName>
        <fullName>Infertility-related sperm protein Spag-1</fullName>
    </alternativeName>
    <alternativeName>
        <fullName>TPR-containing protein involved in spermatogenesis</fullName>
        <shortName>TPIS</shortName>
    </alternativeName>
</protein>
<dbReference type="EMBL" id="AF181252">
    <property type="protein sequence ID" value="AAF06160.1"/>
    <property type="molecule type" value="mRNA"/>
</dbReference>
<dbReference type="EMBL" id="AF181253">
    <property type="protein sequence ID" value="AAF06161.1"/>
    <property type="molecule type" value="mRNA"/>
</dbReference>
<dbReference type="EMBL" id="AK032601">
    <property type="protein sequence ID" value="BAC27944.1"/>
    <property type="status" value="ALT_INIT"/>
    <property type="molecule type" value="mRNA"/>
</dbReference>
<dbReference type="EMBL" id="BC046313">
    <property type="protein sequence ID" value="AAH46313.1"/>
    <property type="molecule type" value="mRNA"/>
</dbReference>
<dbReference type="CCDS" id="CCDS37061.1">
    <molecule id="Q80ZX8-1"/>
</dbReference>
<dbReference type="PIR" id="JC7111">
    <property type="entry name" value="JC7111"/>
</dbReference>
<dbReference type="RefSeq" id="NP_001346909.1">
    <molecule id="Q80ZX8-1"/>
    <property type="nucleotide sequence ID" value="NM_001359980.1"/>
</dbReference>
<dbReference type="RefSeq" id="NP_001346912.1">
    <molecule id="Q80ZX8-3"/>
    <property type="nucleotide sequence ID" value="NM_001359983.1"/>
</dbReference>
<dbReference type="RefSeq" id="NP_001403213.1">
    <molecule id="Q80ZX8-1"/>
    <property type="nucleotide sequence ID" value="NM_001416284.1"/>
</dbReference>
<dbReference type="RefSeq" id="NP_036161.2">
    <molecule id="Q80ZX8-1"/>
    <property type="nucleotide sequence ID" value="NM_012031.4"/>
</dbReference>
<dbReference type="RefSeq" id="XP_006520138.1">
    <property type="nucleotide sequence ID" value="XM_006520075.2"/>
</dbReference>
<dbReference type="RefSeq" id="XP_006520139.1">
    <molecule id="Q80ZX8-1"/>
    <property type="nucleotide sequence ID" value="XM_006520076.3"/>
</dbReference>
<dbReference type="RefSeq" id="XP_006520141.1">
    <molecule id="Q80ZX8-3"/>
    <property type="nucleotide sequence ID" value="XM_006520078.5"/>
</dbReference>
<dbReference type="RefSeq" id="XP_006520142.1">
    <property type="nucleotide sequence ID" value="XM_006520079.3"/>
</dbReference>
<dbReference type="RefSeq" id="XP_017172125.1">
    <property type="nucleotide sequence ID" value="XM_017316636.1"/>
</dbReference>
<dbReference type="RefSeq" id="XP_017172126.1">
    <property type="nucleotide sequence ID" value="XM_017316637.1"/>
</dbReference>
<dbReference type="RefSeq" id="XP_036015334.1">
    <molecule id="Q80ZX8-3"/>
    <property type="nucleotide sequence ID" value="XM_036159441.1"/>
</dbReference>
<dbReference type="SMR" id="Q80ZX8"/>
<dbReference type="BioGRID" id="205078">
    <property type="interactions" value="4"/>
</dbReference>
<dbReference type="FunCoup" id="Q80ZX8">
    <property type="interactions" value="303"/>
</dbReference>
<dbReference type="STRING" id="10090.ENSMUSP00000047335"/>
<dbReference type="iPTMnet" id="Q80ZX8"/>
<dbReference type="PhosphoSitePlus" id="Q80ZX8"/>
<dbReference type="SwissPalm" id="Q80ZX8"/>
<dbReference type="PaxDb" id="10090-ENSMUSP00000047335"/>
<dbReference type="PeptideAtlas" id="Q80ZX8"/>
<dbReference type="ProteomicsDB" id="257298">
    <molecule id="Q80ZX8-1"/>
</dbReference>
<dbReference type="ProteomicsDB" id="257299">
    <molecule id="Q80ZX8-2"/>
</dbReference>
<dbReference type="ProteomicsDB" id="257300">
    <molecule id="Q80ZX8-3"/>
</dbReference>
<dbReference type="Antibodypedia" id="26172">
    <property type="antibodies" value="167 antibodies from 17 providers"/>
</dbReference>
<dbReference type="DNASU" id="26942"/>
<dbReference type="Ensembl" id="ENSMUST00000047348.11">
    <molecule id="Q80ZX8-1"/>
    <property type="protein sequence ID" value="ENSMUSP00000047335.4"/>
    <property type="gene ID" value="ENSMUSG00000037617.13"/>
</dbReference>
<dbReference type="Ensembl" id="ENSMUST00000171205.3">
    <molecule id="Q80ZX8-1"/>
    <property type="protein sequence ID" value="ENSMUSP00000132233.2"/>
    <property type="gene ID" value="ENSMUSG00000037617.13"/>
</dbReference>
<dbReference type="GeneID" id="26942"/>
<dbReference type="KEGG" id="mmu:26942"/>
<dbReference type="UCSC" id="uc007vmn.1">
    <molecule id="Q80ZX8-1"/>
    <property type="organism name" value="mouse"/>
</dbReference>
<dbReference type="AGR" id="MGI:1349387"/>
<dbReference type="CTD" id="6674"/>
<dbReference type="MGI" id="MGI:1349387">
    <property type="gene designation" value="Spag1"/>
</dbReference>
<dbReference type="VEuPathDB" id="HostDB:ENSMUSG00000037617"/>
<dbReference type="eggNOG" id="KOG1124">
    <property type="taxonomic scope" value="Eukaryota"/>
</dbReference>
<dbReference type="GeneTree" id="ENSGT00940000154697"/>
<dbReference type="HOGENOM" id="CLU_008405_1_0_1"/>
<dbReference type="InParanoid" id="Q80ZX8"/>
<dbReference type="OMA" id="ECTIYTN"/>
<dbReference type="OrthoDB" id="2942533at2759"/>
<dbReference type="PhylomeDB" id="Q80ZX8"/>
<dbReference type="TreeFam" id="TF106251"/>
<dbReference type="BioGRID-ORCS" id="26942">
    <property type="hits" value="3 hits in 77 CRISPR screens"/>
</dbReference>
<dbReference type="ChiTaRS" id="Spag1">
    <property type="organism name" value="mouse"/>
</dbReference>
<dbReference type="PRO" id="PR:Q80ZX8"/>
<dbReference type="Proteomes" id="UP000000589">
    <property type="component" value="Chromosome 15"/>
</dbReference>
<dbReference type="RNAct" id="Q80ZX8">
    <property type="molecule type" value="protein"/>
</dbReference>
<dbReference type="Bgee" id="ENSMUSG00000037617">
    <property type="expression patterns" value="Expressed in animal zygote and 175 other cell types or tissues"/>
</dbReference>
<dbReference type="ExpressionAtlas" id="Q80ZX8">
    <property type="expression patterns" value="baseline and differential"/>
</dbReference>
<dbReference type="GO" id="GO:0005929">
    <property type="term" value="C:cilium"/>
    <property type="evidence" value="ECO:0007669"/>
    <property type="project" value="Ensembl"/>
</dbReference>
<dbReference type="GO" id="GO:0005737">
    <property type="term" value="C:cytoplasm"/>
    <property type="evidence" value="ECO:0000250"/>
    <property type="project" value="UniProtKB"/>
</dbReference>
<dbReference type="GO" id="GO:0005829">
    <property type="term" value="C:cytosol"/>
    <property type="evidence" value="ECO:0007669"/>
    <property type="project" value="Ensembl"/>
</dbReference>
<dbReference type="GO" id="GO:0120293">
    <property type="term" value="C:dynein axonemal particle"/>
    <property type="evidence" value="ECO:0007669"/>
    <property type="project" value="UniProtKB-SubCell"/>
</dbReference>
<dbReference type="GO" id="GO:0005654">
    <property type="term" value="C:nucleoplasm"/>
    <property type="evidence" value="ECO:0007669"/>
    <property type="project" value="Ensembl"/>
</dbReference>
<dbReference type="GO" id="GO:0101031">
    <property type="term" value="C:protein folding chaperone complex"/>
    <property type="evidence" value="ECO:0007669"/>
    <property type="project" value="Ensembl"/>
</dbReference>
<dbReference type="GO" id="GO:0005525">
    <property type="term" value="F:GTP binding"/>
    <property type="evidence" value="ECO:0007669"/>
    <property type="project" value="UniProtKB-KW"/>
</dbReference>
<dbReference type="GO" id="GO:0016787">
    <property type="term" value="F:hydrolase activity"/>
    <property type="evidence" value="ECO:0007669"/>
    <property type="project" value="UniProtKB-KW"/>
</dbReference>
<dbReference type="GO" id="GO:0070286">
    <property type="term" value="P:axonemal dynein complex assembly"/>
    <property type="evidence" value="ECO:0000250"/>
    <property type="project" value="UniProtKB"/>
</dbReference>
<dbReference type="GO" id="GO:0007338">
    <property type="term" value="P:single fertilization"/>
    <property type="evidence" value="ECO:0007669"/>
    <property type="project" value="UniProtKB-KW"/>
</dbReference>
<dbReference type="FunFam" id="1.25.40.10:FF:000221">
    <property type="entry name" value="Mitochondrial import receptor subunit TOM34"/>
    <property type="match status" value="1"/>
</dbReference>
<dbReference type="FunFam" id="1.25.40.10:FF:000368">
    <property type="entry name" value="Sperm associated antigen 1"/>
    <property type="match status" value="1"/>
</dbReference>
<dbReference type="FunFam" id="1.25.40.10:FF:000375">
    <property type="entry name" value="Sperm associated antigen 1"/>
    <property type="match status" value="1"/>
</dbReference>
<dbReference type="Gene3D" id="1.25.40.10">
    <property type="entry name" value="Tetratricopeptide repeat domain"/>
    <property type="match status" value="3"/>
</dbReference>
<dbReference type="InterPro" id="IPR051982">
    <property type="entry name" value="CiliaryAsmbly_MitoImport"/>
</dbReference>
<dbReference type="InterPro" id="IPR025986">
    <property type="entry name" value="RPAP3-like_C"/>
</dbReference>
<dbReference type="InterPro" id="IPR011990">
    <property type="entry name" value="TPR-like_helical_dom_sf"/>
</dbReference>
<dbReference type="InterPro" id="IPR019734">
    <property type="entry name" value="TPR_rpt"/>
</dbReference>
<dbReference type="PANTHER" id="PTHR45984">
    <property type="entry name" value="RNA (RNA) POLYMERASE II ASSOCIATED PROTEIN HOMOLOG"/>
    <property type="match status" value="1"/>
</dbReference>
<dbReference type="PANTHER" id="PTHR45984:SF3">
    <property type="entry name" value="SPERM-ASSOCIATED ANTIGEN 1"/>
    <property type="match status" value="1"/>
</dbReference>
<dbReference type="Pfam" id="PF13877">
    <property type="entry name" value="RPAP3_C"/>
    <property type="match status" value="1"/>
</dbReference>
<dbReference type="Pfam" id="PF00515">
    <property type="entry name" value="TPR_1"/>
    <property type="match status" value="2"/>
</dbReference>
<dbReference type="Pfam" id="PF13181">
    <property type="entry name" value="TPR_8"/>
    <property type="match status" value="1"/>
</dbReference>
<dbReference type="SMART" id="SM00028">
    <property type="entry name" value="TPR"/>
    <property type="match status" value="8"/>
</dbReference>
<dbReference type="SUPFAM" id="SSF48452">
    <property type="entry name" value="TPR-like"/>
    <property type="match status" value="3"/>
</dbReference>
<dbReference type="PROSITE" id="PS50005">
    <property type="entry name" value="TPR"/>
    <property type="match status" value="6"/>
</dbReference>
<dbReference type="PROSITE" id="PS50293">
    <property type="entry name" value="TPR_REGION"/>
    <property type="match status" value="4"/>
</dbReference>
<name>SPAG1_MOUSE</name>
<keyword id="KW-0025">Alternative splicing</keyword>
<keyword id="KW-0963">Cytoplasm</keyword>
<keyword id="KW-0278">Fertilization</keyword>
<keyword id="KW-0342">GTP-binding</keyword>
<keyword id="KW-0378">Hydrolase</keyword>
<keyword id="KW-0547">Nucleotide-binding</keyword>
<keyword id="KW-0597">Phosphoprotein</keyword>
<keyword id="KW-1185">Reference proteome</keyword>
<keyword id="KW-0677">Repeat</keyword>
<keyword id="KW-0802">TPR repeat</keyword>
<accession>Q80ZX8</accession>
<accession>Q8CCK7</accession>
<accession>Q9QZJ3</accession>
<accession>Q9QZJ4</accession>
<organism>
    <name type="scientific">Mus musculus</name>
    <name type="common">Mouse</name>
    <dbReference type="NCBI Taxonomy" id="10090"/>
    <lineage>
        <taxon>Eukaryota</taxon>
        <taxon>Metazoa</taxon>
        <taxon>Chordata</taxon>
        <taxon>Craniata</taxon>
        <taxon>Vertebrata</taxon>
        <taxon>Euteleostomi</taxon>
        <taxon>Mammalia</taxon>
        <taxon>Eutheria</taxon>
        <taxon>Euarchontoglires</taxon>
        <taxon>Glires</taxon>
        <taxon>Rodentia</taxon>
        <taxon>Myomorpha</taxon>
        <taxon>Muroidea</taxon>
        <taxon>Muridae</taxon>
        <taxon>Murinae</taxon>
        <taxon>Mus</taxon>
        <taxon>Mus</taxon>
    </lineage>
</organism>
<gene>
    <name type="primary">Spag1</name>
    <name type="synonym">Tpis</name>
</gene>
<feature type="chain" id="PRO_0000106325" description="Sperm-associated antigen 1">
    <location>
        <begin position="1"/>
        <end position="901"/>
    </location>
</feature>
<feature type="repeat" description="TPR 1">
    <location>
        <begin position="213"/>
        <end position="246"/>
    </location>
</feature>
<feature type="repeat" description="TPR 2">
    <location>
        <begin position="247"/>
        <end position="279"/>
    </location>
</feature>
<feature type="repeat" description="TPR 3">
    <location>
        <begin position="280"/>
        <end position="313"/>
    </location>
</feature>
<feature type="repeat" description="TPR 4">
    <location>
        <begin position="430"/>
        <end position="464"/>
    </location>
</feature>
<feature type="repeat" description="TPR 5">
    <location>
        <begin position="472"/>
        <end position="505"/>
    </location>
</feature>
<feature type="repeat" description="TPR 6">
    <location>
        <begin position="507"/>
        <end position="539"/>
    </location>
</feature>
<feature type="repeat" description="TPR 7">
    <location>
        <begin position="606"/>
        <end position="639"/>
    </location>
</feature>
<feature type="repeat" description="TPR 8">
    <location>
        <begin position="640"/>
        <end position="673"/>
    </location>
</feature>
<feature type="region of interest" description="Disordered" evidence="5">
    <location>
        <begin position="322"/>
        <end position="437"/>
    </location>
</feature>
<feature type="region of interest" description="Disordered" evidence="5">
    <location>
        <begin position="694"/>
        <end position="776"/>
    </location>
</feature>
<feature type="compositionally biased region" description="Basic and acidic residues" evidence="5">
    <location>
        <begin position="708"/>
        <end position="717"/>
    </location>
</feature>
<feature type="binding site" evidence="4">
    <location>
        <begin position="756"/>
        <end position="763"/>
    </location>
    <ligand>
        <name>GTP</name>
        <dbReference type="ChEBI" id="CHEBI:37565"/>
    </ligand>
</feature>
<feature type="modified residue" description="Phosphoserine" evidence="10">
    <location>
        <position position="351"/>
    </location>
</feature>
<feature type="modified residue" description="Phosphoserine" evidence="10">
    <location>
        <position position="359"/>
    </location>
</feature>
<feature type="modified residue" description="Phosphoserine" evidence="3">
    <location>
        <position position="703"/>
    </location>
</feature>
<feature type="modified residue" description="Phosphoserine" evidence="10">
    <location>
        <position position="739"/>
    </location>
</feature>
<feature type="modified residue" description="Phosphoserine" evidence="10">
    <location>
        <position position="740"/>
    </location>
</feature>
<feature type="modified residue" description="Phosphoserine" evidence="2">
    <location>
        <position position="766"/>
    </location>
</feature>
<feature type="splice variant" id="VSP_012684" description="In isoform 2." evidence="7">
    <location>
        <begin position="1"/>
        <end position="372"/>
    </location>
</feature>
<feature type="splice variant" id="VSP_012685" description="In isoform 3." evidence="8">
    <location>
        <begin position="1"/>
        <end position="233"/>
    </location>
</feature>
<feature type="sequence conflict" description="In Ref. 1; AAF06160." evidence="9" ref="1">
    <original>C</original>
    <variation>R</variation>
    <location>
        <position position="115"/>
    </location>
</feature>
<feature type="sequence conflict" description="In Ref. 1; AAF06160." evidence="9" ref="1">
    <original>E</original>
    <variation>A</variation>
    <location>
        <position position="364"/>
    </location>
</feature>
<feature type="sequence conflict" description="In Ref. 1; AAF06160/AAF06161." evidence="9" ref="1">
    <original>H</original>
    <variation>Y</variation>
    <location>
        <position position="419"/>
    </location>
</feature>
<feature type="sequence conflict" description="In Ref. 1; AAF06160/AAF06161." evidence="9" ref="1">
    <original>E</original>
    <variation>D</variation>
    <location>
        <position position="664"/>
    </location>
</feature>
<reference key="1">
    <citation type="journal article" date="1999" name="Biochem. Biophys. Res. Commun.">
        <title>A tetratricopeptide repeat-containing protein gene, tpis, whose expression is induced with differentiation of spermatogenic cells.</title>
        <authorList>
            <person name="Takaishi M."/>
            <person name="Huh N.-H."/>
        </authorList>
    </citation>
    <scope>NUCLEOTIDE SEQUENCE [MRNA] (ISOFORMS 1 AND 2)</scope>
    <scope>DEVELOPMENTAL STAGE</scope>
    <scope>TISSUE SPECIFICITY</scope>
    <source>
        <strain>ICR</strain>
        <tissue>Fetal skin</tissue>
        <tissue>Testis</tissue>
    </source>
</reference>
<reference key="2">
    <citation type="journal article" date="2005" name="Science">
        <title>The transcriptional landscape of the mammalian genome.</title>
        <authorList>
            <person name="Carninci P."/>
            <person name="Kasukawa T."/>
            <person name="Katayama S."/>
            <person name="Gough J."/>
            <person name="Frith M.C."/>
            <person name="Maeda N."/>
            <person name="Oyama R."/>
            <person name="Ravasi T."/>
            <person name="Lenhard B."/>
            <person name="Wells C."/>
            <person name="Kodzius R."/>
            <person name="Shimokawa K."/>
            <person name="Bajic V.B."/>
            <person name="Brenner S.E."/>
            <person name="Batalov S."/>
            <person name="Forrest A.R."/>
            <person name="Zavolan M."/>
            <person name="Davis M.J."/>
            <person name="Wilming L.G."/>
            <person name="Aidinis V."/>
            <person name="Allen J.E."/>
            <person name="Ambesi-Impiombato A."/>
            <person name="Apweiler R."/>
            <person name="Aturaliya R.N."/>
            <person name="Bailey T.L."/>
            <person name="Bansal M."/>
            <person name="Baxter L."/>
            <person name="Beisel K.W."/>
            <person name="Bersano T."/>
            <person name="Bono H."/>
            <person name="Chalk A.M."/>
            <person name="Chiu K.P."/>
            <person name="Choudhary V."/>
            <person name="Christoffels A."/>
            <person name="Clutterbuck D.R."/>
            <person name="Crowe M.L."/>
            <person name="Dalla E."/>
            <person name="Dalrymple B.P."/>
            <person name="de Bono B."/>
            <person name="Della Gatta G."/>
            <person name="di Bernardo D."/>
            <person name="Down T."/>
            <person name="Engstrom P."/>
            <person name="Fagiolini M."/>
            <person name="Faulkner G."/>
            <person name="Fletcher C.F."/>
            <person name="Fukushima T."/>
            <person name="Furuno M."/>
            <person name="Futaki S."/>
            <person name="Gariboldi M."/>
            <person name="Georgii-Hemming P."/>
            <person name="Gingeras T.R."/>
            <person name="Gojobori T."/>
            <person name="Green R.E."/>
            <person name="Gustincich S."/>
            <person name="Harbers M."/>
            <person name="Hayashi Y."/>
            <person name="Hensch T.K."/>
            <person name="Hirokawa N."/>
            <person name="Hill D."/>
            <person name="Huminiecki L."/>
            <person name="Iacono M."/>
            <person name="Ikeo K."/>
            <person name="Iwama A."/>
            <person name="Ishikawa T."/>
            <person name="Jakt M."/>
            <person name="Kanapin A."/>
            <person name="Katoh M."/>
            <person name="Kawasawa Y."/>
            <person name="Kelso J."/>
            <person name="Kitamura H."/>
            <person name="Kitano H."/>
            <person name="Kollias G."/>
            <person name="Krishnan S.P."/>
            <person name="Kruger A."/>
            <person name="Kummerfeld S.K."/>
            <person name="Kurochkin I.V."/>
            <person name="Lareau L.F."/>
            <person name="Lazarevic D."/>
            <person name="Lipovich L."/>
            <person name="Liu J."/>
            <person name="Liuni S."/>
            <person name="McWilliam S."/>
            <person name="Madan Babu M."/>
            <person name="Madera M."/>
            <person name="Marchionni L."/>
            <person name="Matsuda H."/>
            <person name="Matsuzawa S."/>
            <person name="Miki H."/>
            <person name="Mignone F."/>
            <person name="Miyake S."/>
            <person name="Morris K."/>
            <person name="Mottagui-Tabar S."/>
            <person name="Mulder N."/>
            <person name="Nakano N."/>
            <person name="Nakauchi H."/>
            <person name="Ng P."/>
            <person name="Nilsson R."/>
            <person name="Nishiguchi S."/>
            <person name="Nishikawa S."/>
            <person name="Nori F."/>
            <person name="Ohara O."/>
            <person name="Okazaki Y."/>
            <person name="Orlando V."/>
            <person name="Pang K.C."/>
            <person name="Pavan W.J."/>
            <person name="Pavesi G."/>
            <person name="Pesole G."/>
            <person name="Petrovsky N."/>
            <person name="Piazza S."/>
            <person name="Reed J."/>
            <person name="Reid J.F."/>
            <person name="Ring B.Z."/>
            <person name="Ringwald M."/>
            <person name="Rost B."/>
            <person name="Ruan Y."/>
            <person name="Salzberg S.L."/>
            <person name="Sandelin A."/>
            <person name="Schneider C."/>
            <person name="Schoenbach C."/>
            <person name="Sekiguchi K."/>
            <person name="Semple C.A."/>
            <person name="Seno S."/>
            <person name="Sessa L."/>
            <person name="Sheng Y."/>
            <person name="Shibata Y."/>
            <person name="Shimada H."/>
            <person name="Shimada K."/>
            <person name="Silva D."/>
            <person name="Sinclair B."/>
            <person name="Sperling S."/>
            <person name="Stupka E."/>
            <person name="Sugiura K."/>
            <person name="Sultana R."/>
            <person name="Takenaka Y."/>
            <person name="Taki K."/>
            <person name="Tammoja K."/>
            <person name="Tan S.L."/>
            <person name="Tang S."/>
            <person name="Taylor M.S."/>
            <person name="Tegner J."/>
            <person name="Teichmann S.A."/>
            <person name="Ueda H.R."/>
            <person name="van Nimwegen E."/>
            <person name="Verardo R."/>
            <person name="Wei C.L."/>
            <person name="Yagi K."/>
            <person name="Yamanishi H."/>
            <person name="Zabarovsky E."/>
            <person name="Zhu S."/>
            <person name="Zimmer A."/>
            <person name="Hide W."/>
            <person name="Bult C."/>
            <person name="Grimmond S.M."/>
            <person name="Teasdale R.D."/>
            <person name="Liu E.T."/>
            <person name="Brusic V."/>
            <person name="Quackenbush J."/>
            <person name="Wahlestedt C."/>
            <person name="Mattick J.S."/>
            <person name="Hume D.A."/>
            <person name="Kai C."/>
            <person name="Sasaki D."/>
            <person name="Tomaru Y."/>
            <person name="Fukuda S."/>
            <person name="Kanamori-Katayama M."/>
            <person name="Suzuki M."/>
            <person name="Aoki J."/>
            <person name="Arakawa T."/>
            <person name="Iida J."/>
            <person name="Imamura K."/>
            <person name="Itoh M."/>
            <person name="Kato T."/>
            <person name="Kawaji H."/>
            <person name="Kawagashira N."/>
            <person name="Kawashima T."/>
            <person name="Kojima M."/>
            <person name="Kondo S."/>
            <person name="Konno H."/>
            <person name="Nakano K."/>
            <person name="Ninomiya N."/>
            <person name="Nishio T."/>
            <person name="Okada M."/>
            <person name="Plessy C."/>
            <person name="Shibata K."/>
            <person name="Shiraki T."/>
            <person name="Suzuki S."/>
            <person name="Tagami M."/>
            <person name="Waki K."/>
            <person name="Watahiki A."/>
            <person name="Okamura-Oho Y."/>
            <person name="Suzuki H."/>
            <person name="Kawai J."/>
            <person name="Hayashizaki Y."/>
        </authorList>
    </citation>
    <scope>NUCLEOTIDE SEQUENCE [LARGE SCALE MRNA] (ISOFORM 3)</scope>
    <source>
        <strain>C57BL/6J</strain>
        <tissue>Olfactory bulb</tissue>
    </source>
</reference>
<reference key="3">
    <citation type="journal article" date="2004" name="Genome Res.">
        <title>The status, quality, and expansion of the NIH full-length cDNA project: the Mammalian Gene Collection (MGC).</title>
        <authorList>
            <consortium name="The MGC Project Team"/>
        </authorList>
    </citation>
    <scope>NUCLEOTIDE SEQUENCE [LARGE SCALE MRNA] (ISOFORM 1)</scope>
    <source>
        <tissue>Olfactory epithelium</tissue>
    </source>
</reference>
<reference key="4">
    <citation type="journal article" date="2010" name="Cell">
        <title>A tissue-specific atlas of mouse protein phosphorylation and expression.</title>
        <authorList>
            <person name="Huttlin E.L."/>
            <person name="Jedrychowski M.P."/>
            <person name="Elias J.E."/>
            <person name="Goswami T."/>
            <person name="Rad R."/>
            <person name="Beausoleil S.A."/>
            <person name="Villen J."/>
            <person name="Haas W."/>
            <person name="Sowa M.E."/>
            <person name="Gygi S.P."/>
        </authorList>
    </citation>
    <scope>PHOSPHORYLATION [LARGE SCALE ANALYSIS] AT SER-351; SER-359; SER-739 AND SER-740</scope>
    <scope>IDENTIFICATION BY MASS SPECTROMETRY [LARGE SCALE ANALYSIS]</scope>
    <source>
        <tissue>Brain</tissue>
        <tissue>Kidney</tissue>
        <tissue>Lung</tissue>
        <tissue>Testis</tissue>
    </source>
</reference>
<comment type="function">
    <text evidence="1 2">May play a role in the cytoplasmic assembly of the ciliary dynein arms (By similarity). May play a role in fertilization. Binds GTP and has GTPase activity (By similarity).</text>
</comment>
<comment type="subcellular location">
    <subcellularLocation>
        <location evidence="2">Cytoplasm</location>
    </subcellularLocation>
    <subcellularLocation>
        <location evidence="2">Dynein axonemal particle</location>
    </subcellularLocation>
    <text evidence="2">Colocalizes with tubulin.</text>
</comment>
<comment type="alternative products">
    <event type="alternative splicing"/>
    <isoform>
        <id>Q80ZX8-1</id>
        <name>1</name>
        <sequence type="displayed"/>
    </isoform>
    <isoform>
        <id>Q80ZX8-2</id>
        <name>2</name>
        <sequence type="described" ref="VSP_012684"/>
    </isoform>
    <isoform>
        <id>Q80ZX8-3</id>
        <name>3</name>
        <sequence type="described" ref="VSP_012685"/>
    </isoform>
</comment>
<comment type="tissue specificity">
    <text evidence="6">Detected in cerebellum, tongue, esophagus, forestomach, sperm and testis.</text>
</comment>
<comment type="developmental stage">
    <text evidence="6">Expression is very low in embryonic epidermis at 13.5 dpc and increases from 14.5 dpc to 16.5 dpc. In young mice expression increases in the testis of 2 to 6 weeks old animals, and then remains stable.</text>
</comment>
<comment type="miscellaneous">
    <text evidence="1">Antibodies against SPAG1 interfere with fertilization.</text>
</comment>
<comment type="sequence caution" evidence="9">
    <conflict type="erroneous initiation">
        <sequence resource="EMBL-CDS" id="BAC27944"/>
    </conflict>
    <text>Extended N-terminus.</text>
</comment>
<sequence>MTAKAKDCPSLWGFGTTKTFKIPIEHLDFKYIENCSDVKHLEKILYVLRSGEEGYYPELTEFCEKCLTNLAPKSRALRKDKPAETASSFSAEEWEKIDSDLKSWVSEIKREENTCHFHDPENHPGVEDPLPPVRGSTCCPHSGKETYSKSKTAKKRIPRDYAEWDKFDVEKECSKIDEDYKEKTVINNKAHLSKIETKIETAGLTEKEKSFLANREKGKGNEAFYSGDYEEAVMYYTRSLSALPTAIAYNNRAQAEIKLQRWSSALEDCEKALELDPGNVKALLRRATTYKHQNKLQEAVDDLRKVLQVEPDNDLAKKTLSEVERDLKNSEPVSELQTKGKRMVIEEVENSGDEGGKGSADEREDGGSDEAAMGNIQKKLMVRRSEGGRRSRRGRTPGPRAEQQGGLRETATASTGDSHYPEEPRAADNPSGLKRRGNELFRGGQFAEAAAQYSVAIAQLEPTGSANADELSILYSNRAACYLKEGNCRDCIQDCNRALELHPFSVKPLLRRAMAYETLEQYRNAYVDYKTVLQIDCGIQLASDSANRIARILTELDGSKWRERLPPIPAVPTSEPLRVWLPAAETPDQDPCPNNCMPSITDEKMFQALKEEGNQLVKDKNYKDAISKYNECLKINSKACAIYTNRALCYLKLGQFEEAKLDCEQALQIDGENVKASHRLALAQKGLENCRESGVDPSQVLLSPDSSEAARHLDTKNDTAPPSKGRERRRIQVQEVDGSSDEEPERPAEASATSAPARDGVEDGGSAEPAEKLDVSKPTNAYEFGQVLSTISARKDEEACAHLLAITAPKDLPLLLSNKLEGDTFLLLIQSLKSHLVAKDPSLVYEHLLYLSKAERFKTMLTLINKGQKEQMAQLFDGLSDTQSDGLTAEDVQALRRQYEL</sequence>
<evidence type="ECO:0000250" key="1"/>
<evidence type="ECO:0000250" key="2">
    <source>
        <dbReference type="UniProtKB" id="Q07617"/>
    </source>
</evidence>
<evidence type="ECO:0000250" key="3">
    <source>
        <dbReference type="UniProtKB" id="Q5U2X2"/>
    </source>
</evidence>
<evidence type="ECO:0000255" key="4"/>
<evidence type="ECO:0000256" key="5">
    <source>
        <dbReference type="SAM" id="MobiDB-lite"/>
    </source>
</evidence>
<evidence type="ECO:0000269" key="6">
    <source>
    </source>
</evidence>
<evidence type="ECO:0000303" key="7">
    <source>
    </source>
</evidence>
<evidence type="ECO:0000303" key="8">
    <source>
    </source>
</evidence>
<evidence type="ECO:0000305" key="9"/>
<evidence type="ECO:0007744" key="10">
    <source>
    </source>
</evidence>